<keyword id="KW-0007">Acetylation</keyword>
<keyword id="KW-0067">ATP-binding</keyword>
<keyword id="KW-0092">Biotin</keyword>
<keyword id="KW-0436">Ligase</keyword>
<keyword id="KW-0442">Lipid degradation</keyword>
<keyword id="KW-0443">Lipid metabolism</keyword>
<keyword id="KW-0460">Magnesium</keyword>
<keyword id="KW-0464">Manganese</keyword>
<keyword id="KW-0479">Metal-binding</keyword>
<keyword id="KW-0496">Mitochondrion</keyword>
<keyword id="KW-0547">Nucleotide-binding</keyword>
<keyword id="KW-0597">Phosphoprotein</keyword>
<keyword id="KW-1185">Reference proteome</keyword>
<keyword id="KW-0809">Transit peptide</keyword>
<sequence>MAGLWVGGSVLVAAGRRGSRSPRPLMRSVALWTLKHVPQYSRQRLLVSRSLCLAGYDSNEKTFDKILIANRGEIACRVIKTCKKMGIKTVAVHSDVDASSVHVTMADEAVCVGPAPTSKSYLNMDAIMEAVRTTRAQAVHPGYGFLSENKEFAKCLAAEGVIFIGPDTHAIQAMGDKIESKLLAKKAKVNTIPGFDGVVKDADEAVRIAREIGYPVMIKASAGGGGKGMRIAWDDEETRDGFRFSSQEAASSFGDDRLLIEKFIDNPRHIEIQVLGDKHGNALWLNERECSIQRRNQKVVEEAPSIFLDSETRRAMGEQAVALAKAVNYSSAGTVEFLVDSKKNFYFLEMNTRLQVEHPVTECITGLDLVQEMIRVAKGYPLRHRQADIPINGWAVECRVYAEDPYKSFGLPSIGRLSQYQEPIHLPGVRVDSGIQPGSDISIYYDPMISKLITYGSNRMEALKRMENALDNYVIRGVTHNIALLREVIINSRFVEGDINTKFLSDVYPDGFKGHKLTEDERNQLLAIASSLFVASQLRAQRFQEPENSRVPIIKPQVANWELSIRLHDEVHTVTASNSGPTFSVEVDGSKLNVTSTWNLASPLLSVSIDGTQRTIQCLSRDAGGNMSIQFLGTVYKVHILTKLAAELNKFMLEKAAEDTSSILHSPMPGVVVAVSVKPGDLVAEGQEICVIEAMKMQNSMTAGKTGKVKSVHCKAGDTVGEGDLLVELE</sequence>
<feature type="transit peptide" description="Mitochondrion" evidence="2">
    <location>
        <begin position="1"/>
        <end position="52"/>
    </location>
</feature>
<feature type="chain" id="PRO_0000448575" description="Propionyl-CoA carboxylase alpha chain, mitochondrial" evidence="5">
    <location>
        <begin position="53"/>
        <end position="730"/>
    </location>
</feature>
<feature type="domain" description="Biotin carboxylation" evidence="7">
    <location>
        <begin position="62"/>
        <end position="509"/>
    </location>
</feature>
<feature type="domain" description="ATP-grasp" evidence="6">
    <location>
        <begin position="181"/>
        <end position="378"/>
    </location>
</feature>
<feature type="domain" description="Biotinyl-binding" evidence="8">
    <location>
        <begin position="655"/>
        <end position="730"/>
    </location>
</feature>
<feature type="active site" evidence="1">
    <location>
        <position position="349"/>
    </location>
</feature>
<feature type="binding site" evidence="1">
    <location>
        <position position="177"/>
    </location>
    <ligand>
        <name>ATP</name>
        <dbReference type="ChEBI" id="CHEBI:30616"/>
    </ligand>
</feature>
<feature type="binding site" evidence="6">
    <location>
        <begin position="209"/>
        <end position="270"/>
    </location>
    <ligand>
        <name>ATP</name>
        <dbReference type="ChEBI" id="CHEBI:30616"/>
    </ligand>
</feature>
<feature type="binding site" evidence="1">
    <location>
        <position position="261"/>
    </location>
    <ligand>
        <name>ATP</name>
        <dbReference type="ChEBI" id="CHEBI:30616"/>
    </ligand>
</feature>
<feature type="binding site" evidence="1">
    <location>
        <position position="296"/>
    </location>
    <ligand>
        <name>ATP</name>
        <dbReference type="ChEBI" id="CHEBI:30616"/>
    </ligand>
</feature>
<feature type="binding site" evidence="6">
    <location>
        <position position="336"/>
    </location>
    <ligand>
        <name>Mg(2+)</name>
        <dbReference type="ChEBI" id="CHEBI:18420"/>
        <label>1</label>
    </ligand>
</feature>
<feature type="binding site" evidence="6">
    <location>
        <position position="336"/>
    </location>
    <ligand>
        <name>Mn(2+)</name>
        <dbReference type="ChEBI" id="CHEBI:29035"/>
        <label>1</label>
    </ligand>
</feature>
<feature type="binding site" evidence="6">
    <location>
        <position position="349"/>
    </location>
    <ligand>
        <name>Mg(2+)</name>
        <dbReference type="ChEBI" id="CHEBI:18420"/>
        <label>1</label>
    </ligand>
</feature>
<feature type="binding site" evidence="6">
    <location>
        <position position="349"/>
    </location>
    <ligand>
        <name>Mg(2+)</name>
        <dbReference type="ChEBI" id="CHEBI:18420"/>
        <label>2</label>
    </ligand>
</feature>
<feature type="binding site" evidence="6">
    <location>
        <position position="349"/>
    </location>
    <ligand>
        <name>Mn(2+)</name>
        <dbReference type="ChEBI" id="CHEBI:29035"/>
        <label>1</label>
    </ligand>
</feature>
<feature type="binding site" evidence="6">
    <location>
        <position position="349"/>
    </location>
    <ligand>
        <name>Mn(2+)</name>
        <dbReference type="ChEBI" id="CHEBI:29035"/>
        <label>2</label>
    </ligand>
</feature>
<feature type="binding site" evidence="6">
    <location>
        <position position="351"/>
    </location>
    <ligand>
        <name>Mg(2+)</name>
        <dbReference type="ChEBI" id="CHEBI:18420"/>
        <label>2</label>
    </ligand>
</feature>
<feature type="binding site" evidence="6">
    <location>
        <position position="351"/>
    </location>
    <ligand>
        <name>Mn(2+)</name>
        <dbReference type="ChEBI" id="CHEBI:29035"/>
        <label>2</label>
    </ligand>
</feature>
<feature type="binding site" evidence="3">
    <location>
        <position position="409"/>
    </location>
    <ligand>
        <name>biotin</name>
        <dbReference type="ChEBI" id="CHEBI:57586"/>
    </ligand>
</feature>
<feature type="modified residue" description="N6-acetyllysine; alternate" evidence="4">
    <location>
        <position position="65"/>
    </location>
</feature>
<feature type="modified residue" description="N6-succinyllysine; alternate" evidence="4">
    <location>
        <position position="65"/>
    </location>
</feature>
<feature type="modified residue" description="N6-succinyllysine" evidence="4">
    <location>
        <position position="119"/>
    </location>
</feature>
<feature type="modified residue" description="N6-acetyllysine; alternate" evidence="4">
    <location>
        <position position="150"/>
    </location>
</feature>
<feature type="modified residue" description="N6-succinyllysine; alternate" evidence="4">
    <location>
        <position position="150"/>
    </location>
</feature>
<feature type="modified residue" description="N6-acetyllysine" evidence="4">
    <location>
        <position position="154"/>
    </location>
</feature>
<feature type="modified residue" description="N6-succinyllysine" evidence="4">
    <location>
        <position position="188"/>
    </location>
</feature>
<feature type="modified residue" description="N6-acetyllysine; alternate" evidence="4">
    <location>
        <position position="200"/>
    </location>
</feature>
<feature type="modified residue" description="N6-succinyllysine; alternate" evidence="4">
    <location>
        <position position="200"/>
    </location>
</feature>
<feature type="modified residue" description="Phosphoserine" evidence="4">
    <location>
        <position position="252"/>
    </location>
</feature>
<feature type="modified residue" description="N6-succinyllysine" evidence="4">
    <location>
        <position position="262"/>
    </location>
</feature>
<feature type="modified residue" description="N6-succinyllysine" evidence="4">
    <location>
        <position position="407"/>
    </location>
</feature>
<feature type="modified residue" description="N6-succinyllysine" evidence="4">
    <location>
        <position position="502"/>
    </location>
</feature>
<feature type="modified residue" description="N6-succinyllysine" evidence="4">
    <location>
        <position position="513"/>
    </location>
</feature>
<feature type="modified residue" description="N6-succinyllysine" evidence="4">
    <location>
        <position position="650"/>
    </location>
</feature>
<feature type="modified residue" description="N6-biotinyllysine" evidence="8">
    <location>
        <position position="696"/>
    </location>
</feature>
<dbReference type="EC" id="6.4.1.3" evidence="9"/>
<dbReference type="EMBL" id="AEMK02000079">
    <property type="status" value="NOT_ANNOTATED_CDS"/>
    <property type="molecule type" value="Genomic_DNA"/>
</dbReference>
<dbReference type="RefSeq" id="XP_020921525.1">
    <property type="nucleotide sequence ID" value="XM_021065866.1"/>
</dbReference>
<dbReference type="SMR" id="P0DTA4"/>
<dbReference type="FunCoup" id="P0DTA4">
    <property type="interactions" value="766"/>
</dbReference>
<dbReference type="STRING" id="9823.ENSSSCP00000051580"/>
<dbReference type="PaxDb" id="9823-ENSSSCP00000010169"/>
<dbReference type="Ensembl" id="ENSSSCT00055045036.1">
    <property type="protein sequence ID" value="ENSSSCP00055035879.1"/>
    <property type="gene ID" value="ENSSSCG00055021858.1"/>
</dbReference>
<dbReference type="Ensembl" id="ENSSSCT00065107014.1">
    <property type="protein sequence ID" value="ENSSSCP00065047653.1"/>
    <property type="gene ID" value="ENSSSCG00065077149.1"/>
</dbReference>
<dbReference type="GeneID" id="100524103"/>
<dbReference type="InParanoid" id="P0DTA4"/>
<dbReference type="OrthoDB" id="196847at2759"/>
<dbReference type="Reactome" id="R-SSC-196780">
    <property type="pathway name" value="Biotin transport and metabolism"/>
</dbReference>
<dbReference type="Reactome" id="R-SSC-71032">
    <property type="pathway name" value="Propionyl-CoA catabolism"/>
</dbReference>
<dbReference type="UniPathway" id="UPA00945">
    <property type="reaction ID" value="UER00908"/>
</dbReference>
<dbReference type="Proteomes" id="UP000008227">
    <property type="component" value="Unplaced"/>
</dbReference>
<dbReference type="Proteomes" id="UP000314985">
    <property type="component" value="Unplaced"/>
</dbReference>
<dbReference type="Proteomes" id="UP000694570">
    <property type="component" value="Unplaced"/>
</dbReference>
<dbReference type="Proteomes" id="UP000694571">
    <property type="component" value="Unplaced"/>
</dbReference>
<dbReference type="Proteomes" id="UP000694720">
    <property type="component" value="Unplaced"/>
</dbReference>
<dbReference type="Proteomes" id="UP000694722">
    <property type="component" value="Unplaced"/>
</dbReference>
<dbReference type="Proteomes" id="UP000694723">
    <property type="component" value="Unplaced"/>
</dbReference>
<dbReference type="Proteomes" id="UP000694724">
    <property type="component" value="Unplaced"/>
</dbReference>
<dbReference type="Proteomes" id="UP000694725">
    <property type="component" value="Unplaced"/>
</dbReference>
<dbReference type="Proteomes" id="UP000694726">
    <property type="component" value="Unplaced"/>
</dbReference>
<dbReference type="Proteomes" id="UP000694727">
    <property type="component" value="Unplaced"/>
</dbReference>
<dbReference type="Proteomes" id="UP000694728">
    <property type="component" value="Unplaced"/>
</dbReference>
<dbReference type="Bgee" id="ENSSSCG00000009522">
    <property type="expression patterns" value="Expressed in liver and 46 other cell types or tissues"/>
</dbReference>
<dbReference type="ExpressionAtlas" id="P0DTA4">
    <property type="expression patterns" value="baseline"/>
</dbReference>
<dbReference type="GO" id="GO:0005759">
    <property type="term" value="C:mitochondrial matrix"/>
    <property type="evidence" value="ECO:0007669"/>
    <property type="project" value="UniProtKB-SubCell"/>
</dbReference>
<dbReference type="GO" id="GO:0005739">
    <property type="term" value="C:mitochondrion"/>
    <property type="evidence" value="ECO:0000318"/>
    <property type="project" value="GO_Central"/>
</dbReference>
<dbReference type="GO" id="GO:0005524">
    <property type="term" value="F:ATP binding"/>
    <property type="evidence" value="ECO:0007669"/>
    <property type="project" value="UniProtKB-KW"/>
</dbReference>
<dbReference type="GO" id="GO:0046872">
    <property type="term" value="F:metal ion binding"/>
    <property type="evidence" value="ECO:0007669"/>
    <property type="project" value="UniProtKB-KW"/>
</dbReference>
<dbReference type="GO" id="GO:0004658">
    <property type="term" value="F:propionyl-CoA carboxylase activity"/>
    <property type="evidence" value="ECO:0000314"/>
    <property type="project" value="UniProtKB"/>
</dbReference>
<dbReference type="GO" id="GO:0019626">
    <property type="term" value="P:short-chain fatty acid catabolic process"/>
    <property type="evidence" value="ECO:0000305"/>
    <property type="project" value="UniProtKB"/>
</dbReference>
<dbReference type="CDD" id="cd06850">
    <property type="entry name" value="biotinyl_domain"/>
    <property type="match status" value="1"/>
</dbReference>
<dbReference type="FunFam" id="3.30.1490.20:FF:000003">
    <property type="entry name" value="acetyl-CoA carboxylase isoform X1"/>
    <property type="match status" value="1"/>
</dbReference>
<dbReference type="FunFam" id="3.30.470.20:FF:000028">
    <property type="entry name" value="Methylcrotonoyl-CoA carboxylase subunit alpha, mitochondrial"/>
    <property type="match status" value="1"/>
</dbReference>
<dbReference type="FunFam" id="2.40.50.100:FF:000029">
    <property type="entry name" value="propionyl-CoA carboxylase alpha chain, mitochondrial"/>
    <property type="match status" value="1"/>
</dbReference>
<dbReference type="FunFam" id="3.40.50.20:FF:000010">
    <property type="entry name" value="Propionyl-CoA carboxylase subunit alpha"/>
    <property type="match status" value="1"/>
</dbReference>
<dbReference type="Gene3D" id="2.40.50.100">
    <property type="match status" value="1"/>
</dbReference>
<dbReference type="Gene3D" id="3.30.700.30">
    <property type="match status" value="1"/>
</dbReference>
<dbReference type="Gene3D" id="3.40.50.20">
    <property type="match status" value="1"/>
</dbReference>
<dbReference type="Gene3D" id="3.30.1490.20">
    <property type="entry name" value="ATP-grasp fold, A domain"/>
    <property type="match status" value="1"/>
</dbReference>
<dbReference type="Gene3D" id="3.30.470.20">
    <property type="entry name" value="ATP-grasp fold, B domain"/>
    <property type="match status" value="1"/>
</dbReference>
<dbReference type="InterPro" id="IPR011761">
    <property type="entry name" value="ATP-grasp"/>
</dbReference>
<dbReference type="InterPro" id="IPR013815">
    <property type="entry name" value="ATP_grasp_subdomain_1"/>
</dbReference>
<dbReference type="InterPro" id="IPR005481">
    <property type="entry name" value="BC-like_N"/>
</dbReference>
<dbReference type="InterPro" id="IPR001882">
    <property type="entry name" value="Biotin_BS"/>
</dbReference>
<dbReference type="InterPro" id="IPR050856">
    <property type="entry name" value="Biotin_carboxylase_complex"/>
</dbReference>
<dbReference type="InterPro" id="IPR011764">
    <property type="entry name" value="Biotin_carboxylation_dom"/>
</dbReference>
<dbReference type="InterPro" id="IPR005482">
    <property type="entry name" value="Biotin_COase_C"/>
</dbReference>
<dbReference type="InterPro" id="IPR000089">
    <property type="entry name" value="Biotin_lipoyl"/>
</dbReference>
<dbReference type="InterPro" id="IPR005479">
    <property type="entry name" value="CbamoylP_synth_lsu-like_ATP-bd"/>
</dbReference>
<dbReference type="InterPro" id="IPR041265">
    <property type="entry name" value="PCC_BT"/>
</dbReference>
<dbReference type="InterPro" id="IPR016185">
    <property type="entry name" value="PreATP-grasp_dom_sf"/>
</dbReference>
<dbReference type="InterPro" id="IPR011054">
    <property type="entry name" value="Rudment_hybrid_motif"/>
</dbReference>
<dbReference type="InterPro" id="IPR011053">
    <property type="entry name" value="Single_hybrid_motif"/>
</dbReference>
<dbReference type="NCBIfam" id="NF006367">
    <property type="entry name" value="PRK08591.1"/>
    <property type="match status" value="1"/>
</dbReference>
<dbReference type="PANTHER" id="PTHR18866">
    <property type="entry name" value="CARBOXYLASE:PYRUVATE/ACETYL-COA/PROPIONYL-COA CARBOXYLASE"/>
    <property type="match status" value="1"/>
</dbReference>
<dbReference type="PANTHER" id="PTHR18866:SF33">
    <property type="entry name" value="METHYLCROTONOYL-COA CARBOXYLASE SUBUNIT ALPHA, MITOCHONDRIAL-RELATED"/>
    <property type="match status" value="1"/>
</dbReference>
<dbReference type="Pfam" id="PF02785">
    <property type="entry name" value="Biotin_carb_C"/>
    <property type="match status" value="1"/>
</dbReference>
<dbReference type="Pfam" id="PF00289">
    <property type="entry name" value="Biotin_carb_N"/>
    <property type="match status" value="1"/>
</dbReference>
<dbReference type="Pfam" id="PF00364">
    <property type="entry name" value="Biotin_lipoyl"/>
    <property type="match status" value="1"/>
</dbReference>
<dbReference type="Pfam" id="PF02786">
    <property type="entry name" value="CPSase_L_D2"/>
    <property type="match status" value="1"/>
</dbReference>
<dbReference type="Pfam" id="PF18140">
    <property type="entry name" value="PCC_BT"/>
    <property type="match status" value="1"/>
</dbReference>
<dbReference type="SMART" id="SM00878">
    <property type="entry name" value="Biotin_carb_C"/>
    <property type="match status" value="1"/>
</dbReference>
<dbReference type="SUPFAM" id="SSF56059">
    <property type="entry name" value="Glutathione synthetase ATP-binding domain-like"/>
    <property type="match status" value="1"/>
</dbReference>
<dbReference type="SUPFAM" id="SSF52440">
    <property type="entry name" value="PreATP-grasp domain"/>
    <property type="match status" value="1"/>
</dbReference>
<dbReference type="SUPFAM" id="SSF51246">
    <property type="entry name" value="Rudiment single hybrid motif"/>
    <property type="match status" value="1"/>
</dbReference>
<dbReference type="SUPFAM" id="SSF51230">
    <property type="entry name" value="Single hybrid motif"/>
    <property type="match status" value="1"/>
</dbReference>
<dbReference type="PROSITE" id="PS50975">
    <property type="entry name" value="ATP_GRASP"/>
    <property type="match status" value="1"/>
</dbReference>
<dbReference type="PROSITE" id="PS50979">
    <property type="entry name" value="BC"/>
    <property type="match status" value="1"/>
</dbReference>
<dbReference type="PROSITE" id="PS00188">
    <property type="entry name" value="BIOTIN"/>
    <property type="match status" value="1"/>
</dbReference>
<dbReference type="PROSITE" id="PS50968">
    <property type="entry name" value="BIOTINYL_LIPOYL"/>
    <property type="match status" value="1"/>
</dbReference>
<dbReference type="PROSITE" id="PS00866">
    <property type="entry name" value="CPSASE_1"/>
    <property type="match status" value="1"/>
</dbReference>
<dbReference type="PROSITE" id="PS00867">
    <property type="entry name" value="CPSASE_2"/>
    <property type="match status" value="1"/>
</dbReference>
<protein>
    <recommendedName>
        <fullName evidence="10">Propionyl-CoA carboxylase alpha chain, mitochondrial</fullName>
        <shortName>PCCase subunit alpha</shortName>
        <ecNumber evidence="9">6.4.1.3</ecNumber>
    </recommendedName>
    <alternativeName>
        <fullName>Propanoyl-CoA:carbon dioxide ligase subunit alpha</fullName>
    </alternativeName>
</protein>
<accession>P0DTA4</accession>
<evidence type="ECO:0000250" key="1"/>
<evidence type="ECO:0000250" key="2">
    <source>
        <dbReference type="UniProtKB" id="P05165"/>
    </source>
</evidence>
<evidence type="ECO:0000250" key="3">
    <source>
        <dbReference type="UniProtKB" id="Q5LUF3"/>
    </source>
</evidence>
<evidence type="ECO:0000250" key="4">
    <source>
        <dbReference type="UniProtKB" id="Q91ZA3"/>
    </source>
</evidence>
<evidence type="ECO:0000255" key="5"/>
<evidence type="ECO:0000255" key="6">
    <source>
        <dbReference type="PROSITE-ProRule" id="PRU00409"/>
    </source>
</evidence>
<evidence type="ECO:0000255" key="7">
    <source>
        <dbReference type="PROSITE-ProRule" id="PRU00969"/>
    </source>
</evidence>
<evidence type="ECO:0000255" key="8">
    <source>
        <dbReference type="PROSITE-ProRule" id="PRU01066"/>
    </source>
</evidence>
<evidence type="ECO:0000269" key="9">
    <source>
    </source>
</evidence>
<evidence type="ECO:0000305" key="10">
    <source>
    </source>
</evidence>
<gene>
    <name evidence="2" type="primary">PCCA</name>
</gene>
<comment type="function">
    <text evidence="3 9">This is one of the 2 subunits of the biotin-dependent propionyl-CoA carboxylase (PCC), a mitochondrial enzyme involved in the catabolism of odd chain fatty acids, branched-chain amino acids isoleucine, threonine, methionine, and valine and other metabolites (PubMed:13752080). Propionyl-CoA carboxylase catalyzes the carboxylation of propionyl-CoA/propanoyl-CoA to D-methylmalonyl-CoA/(S)-methylmalonyl-CoA (PubMed:13752080). Within the holoenzyme, the alpha subunit catalyzes the ATP-dependent carboxylation of the biotin carried by the biotin carboxyl carrier (BCC) domain, while the beta subunit then tranfers the carboxyl group from carboxylated biotin to propionyl-CoA (By similarity). Propionyl-CoA carboxylase also significantly acts on butyryl-CoA/butanoyl-CoA, which is converted to ethylmalonyl-CoA/(2S)-ethylmalonyl-CoA at a much lower rate (PubMed:13752080). Other alternative minor substrates include (2E)-butenoyl-CoA/crotonoyl-CoA (PubMed:13752080).</text>
</comment>
<comment type="catalytic activity">
    <reaction evidence="9">
        <text>propanoyl-CoA + hydrogencarbonate + ATP = (S)-methylmalonyl-CoA + ADP + phosphate + H(+)</text>
        <dbReference type="Rhea" id="RHEA:23720"/>
        <dbReference type="ChEBI" id="CHEBI:15378"/>
        <dbReference type="ChEBI" id="CHEBI:17544"/>
        <dbReference type="ChEBI" id="CHEBI:30616"/>
        <dbReference type="ChEBI" id="CHEBI:43474"/>
        <dbReference type="ChEBI" id="CHEBI:57327"/>
        <dbReference type="ChEBI" id="CHEBI:57392"/>
        <dbReference type="ChEBI" id="CHEBI:456216"/>
        <dbReference type="EC" id="6.4.1.3"/>
    </reaction>
    <physiologicalReaction direction="left-to-right" evidence="9">
        <dbReference type="Rhea" id="RHEA:23721"/>
    </physiologicalReaction>
</comment>
<comment type="catalytic activity">
    <reaction evidence="9">
        <text>butanoyl-CoA + hydrogencarbonate + ATP = (2S)-ethylmalonyl-CoA + ADP + phosphate + H(+)</text>
        <dbReference type="Rhea" id="RHEA:59520"/>
        <dbReference type="ChEBI" id="CHEBI:15378"/>
        <dbReference type="ChEBI" id="CHEBI:17544"/>
        <dbReference type="ChEBI" id="CHEBI:30616"/>
        <dbReference type="ChEBI" id="CHEBI:43474"/>
        <dbReference type="ChEBI" id="CHEBI:57371"/>
        <dbReference type="ChEBI" id="CHEBI:60909"/>
        <dbReference type="ChEBI" id="CHEBI:456216"/>
    </reaction>
    <physiologicalReaction direction="left-to-right" evidence="9">
        <dbReference type="Rhea" id="RHEA:59521"/>
    </physiologicalReaction>
</comment>
<comment type="cofactor">
    <cofactor evidence="6">
        <name>Mg(2+)</name>
        <dbReference type="ChEBI" id="CHEBI:18420"/>
    </cofactor>
    <cofactor evidence="6">
        <name>Mn(2+)</name>
        <dbReference type="ChEBI" id="CHEBI:29035"/>
    </cofactor>
    <text evidence="6">Binds 2 magnesium or manganese ions per subunit.</text>
</comment>
<comment type="cofactor">
    <cofactor evidence="8 9">
        <name>biotin</name>
        <dbReference type="ChEBI" id="CHEBI:57586"/>
    </cofactor>
</comment>
<comment type="biophysicochemical properties">
    <phDependence>
        <text evidence="9">Optimum pH is 8.0-8.2 for the propionyl-CoA carboxylase activity.</text>
    </phDependence>
</comment>
<comment type="pathway">
    <text evidence="9">Metabolic intermediate metabolism; propanoyl-CoA degradation; succinyl-CoA from propanoyl-CoA: step 1/3.</text>
</comment>
<comment type="subunit">
    <text evidence="2">The holoenzyme is a dodecamer composed of 6 PCCA/alpha subunits and 6 PCCB/beta subunits. Interacts (via the biotin carboxylation domain) with SIRT4. Interacts with SIRT3 and SIRT5.</text>
</comment>
<comment type="subcellular location">
    <subcellularLocation>
        <location evidence="10">Mitochondrion matrix</location>
    </subcellularLocation>
</comment>
<comment type="domain">
    <text evidence="2">Consists of a biotin carboxylase (BC) domain at the amino terminus and a biotinyl-binding/biotin carboxyl carrier(BCC) domain at the carboxyl terminus.</text>
</comment>
<comment type="PTM">
    <text evidence="4">Acetylated.</text>
</comment>
<comment type="PTM">
    <text evidence="2">The biotin cofactor is covalently attached to the C-terminal biotinyl-binding domain and is required for the catalytic activity (By similarity). Biotinylation is catalyzed by HLCS (By similarity).</text>
</comment>
<proteinExistence type="evidence at protein level"/>
<name>PCCA_PIG</name>
<organism>
    <name type="scientific">Sus scrofa</name>
    <name type="common">Pig</name>
    <dbReference type="NCBI Taxonomy" id="9823"/>
    <lineage>
        <taxon>Eukaryota</taxon>
        <taxon>Metazoa</taxon>
        <taxon>Chordata</taxon>
        <taxon>Craniata</taxon>
        <taxon>Vertebrata</taxon>
        <taxon>Euteleostomi</taxon>
        <taxon>Mammalia</taxon>
        <taxon>Eutheria</taxon>
        <taxon>Laurasiatheria</taxon>
        <taxon>Artiodactyla</taxon>
        <taxon>Suina</taxon>
        <taxon>Suidae</taxon>
        <taxon>Sus</taxon>
    </lineage>
</organism>
<reference key="1">
    <citation type="submission" date="2009-11" db="EMBL/GenBank/DDBJ databases">
        <authorList>
            <consortium name="Porcine genome sequencing project"/>
        </authorList>
    </citation>
    <scope>NUCLEOTIDE SEQUENCE [LARGE SCALE GENOMIC DNA]</scope>
</reference>
<reference key="2">
    <citation type="journal article" date="1961" name="J. Biol. Chem.">
        <title>Metabolism of propionic acid in animal tissues. VIII. Crystalline propionyl carboxylase.</title>
        <authorList>
            <person name="Kaziro Y."/>
            <person name="Ochoa S."/>
            <person name="Warner R.C."/>
            <person name="Chen J.Y."/>
        </authorList>
    </citation>
    <scope>FUNCTION</scope>
    <scope>CATALYTIC ACTIVITY</scope>
    <scope>COFACTOR</scope>
    <scope>BIOPHYSICOCHEMICAL PROPERTIES</scope>
    <scope>PATHWAY</scope>
    <scope>SUBCELLULAR LOCATION</scope>
</reference>